<name>FUR_VIBVU</name>
<accession>P33117</accession>
<comment type="function">
    <text>Fur acts as a repressor, employing Fe(2+) as a cofactor to bind the operator of the iron transport operon.</text>
</comment>
<comment type="subunit">
    <text evidence="1">Homodimer.</text>
</comment>
<comment type="subcellular location">
    <subcellularLocation>
        <location evidence="1">Cytoplasm</location>
    </subcellularLocation>
</comment>
<comment type="similarity">
    <text evidence="2">Belongs to the Fur family.</text>
</comment>
<proteinExistence type="inferred from homology"/>
<dbReference type="EMBL" id="L06428">
    <property type="protein sequence ID" value="AAA27521.1"/>
    <property type="molecule type" value="Genomic_DNA"/>
</dbReference>
<dbReference type="EMBL" id="AE016795">
    <property type="protein sequence ID" value="AAO08713.1"/>
    <property type="molecule type" value="Genomic_DNA"/>
</dbReference>
<dbReference type="PIR" id="A47054">
    <property type="entry name" value="A47054"/>
</dbReference>
<dbReference type="SMR" id="P33117"/>
<dbReference type="KEGG" id="vvu:VV1_0175"/>
<dbReference type="HOGENOM" id="CLU_096072_3_3_6"/>
<dbReference type="Proteomes" id="UP000002275">
    <property type="component" value="Chromosome 1"/>
</dbReference>
<dbReference type="CollecTF" id="EXPREG_00000a30"/>
<dbReference type="GO" id="GO:0005829">
    <property type="term" value="C:cytosol"/>
    <property type="evidence" value="ECO:0007669"/>
    <property type="project" value="TreeGrafter"/>
</dbReference>
<dbReference type="GO" id="GO:0032993">
    <property type="term" value="C:protein-DNA complex"/>
    <property type="evidence" value="ECO:0000315"/>
    <property type="project" value="CollecTF"/>
</dbReference>
<dbReference type="GO" id="GO:0001216">
    <property type="term" value="F:DNA-binding transcription activator activity"/>
    <property type="evidence" value="ECO:0000315"/>
    <property type="project" value="CollecTF"/>
</dbReference>
<dbReference type="GO" id="GO:0001217">
    <property type="term" value="F:DNA-binding transcription repressor activity"/>
    <property type="evidence" value="ECO:0000315"/>
    <property type="project" value="CollecTF"/>
</dbReference>
<dbReference type="GO" id="GO:0043565">
    <property type="term" value="F:sequence-specific DNA binding"/>
    <property type="evidence" value="ECO:0000353"/>
    <property type="project" value="CollecTF"/>
</dbReference>
<dbReference type="GO" id="GO:0000976">
    <property type="term" value="F:transcription cis-regulatory region binding"/>
    <property type="evidence" value="ECO:0000315"/>
    <property type="project" value="CollecTF"/>
</dbReference>
<dbReference type="GO" id="GO:0008270">
    <property type="term" value="F:zinc ion binding"/>
    <property type="evidence" value="ECO:0007669"/>
    <property type="project" value="TreeGrafter"/>
</dbReference>
<dbReference type="GO" id="GO:0045892">
    <property type="term" value="P:negative regulation of DNA-templated transcription"/>
    <property type="evidence" value="ECO:0000270"/>
    <property type="project" value="CollecTF"/>
</dbReference>
<dbReference type="GO" id="GO:1900705">
    <property type="term" value="P:negative regulation of siderophore biosynthetic process"/>
    <property type="evidence" value="ECO:0007669"/>
    <property type="project" value="TreeGrafter"/>
</dbReference>
<dbReference type="CDD" id="cd07153">
    <property type="entry name" value="Fur_like"/>
    <property type="match status" value="1"/>
</dbReference>
<dbReference type="FunFam" id="1.10.10.10:FF:000007">
    <property type="entry name" value="Ferric uptake regulation protein"/>
    <property type="match status" value="1"/>
</dbReference>
<dbReference type="FunFam" id="3.30.1490.190:FF:000001">
    <property type="entry name" value="Ferric uptake regulation protein"/>
    <property type="match status" value="1"/>
</dbReference>
<dbReference type="Gene3D" id="3.30.1490.190">
    <property type="match status" value="1"/>
</dbReference>
<dbReference type="Gene3D" id="1.10.10.10">
    <property type="entry name" value="Winged helix-like DNA-binding domain superfamily/Winged helix DNA-binding domain"/>
    <property type="match status" value="1"/>
</dbReference>
<dbReference type="InterPro" id="IPR002481">
    <property type="entry name" value="FUR"/>
</dbReference>
<dbReference type="InterPro" id="IPR043135">
    <property type="entry name" value="Fur_C"/>
</dbReference>
<dbReference type="InterPro" id="IPR036388">
    <property type="entry name" value="WH-like_DNA-bd_sf"/>
</dbReference>
<dbReference type="InterPro" id="IPR036390">
    <property type="entry name" value="WH_DNA-bd_sf"/>
</dbReference>
<dbReference type="NCBIfam" id="NF006999">
    <property type="entry name" value="PRK09462.1"/>
    <property type="match status" value="1"/>
</dbReference>
<dbReference type="PANTHER" id="PTHR33202:SF2">
    <property type="entry name" value="FERRIC UPTAKE REGULATION PROTEIN"/>
    <property type="match status" value="1"/>
</dbReference>
<dbReference type="PANTHER" id="PTHR33202">
    <property type="entry name" value="ZINC UPTAKE REGULATION PROTEIN"/>
    <property type="match status" value="1"/>
</dbReference>
<dbReference type="Pfam" id="PF01475">
    <property type="entry name" value="FUR"/>
    <property type="match status" value="1"/>
</dbReference>
<dbReference type="SUPFAM" id="SSF46785">
    <property type="entry name" value="Winged helix' DNA-binding domain"/>
    <property type="match status" value="1"/>
</dbReference>
<protein>
    <recommendedName>
        <fullName>Ferric uptake regulation protein</fullName>
        <shortName>Ferric uptake regulator</shortName>
    </recommendedName>
</protein>
<feature type="chain" id="PRO_0000095587" description="Ferric uptake regulation protein">
    <location>
        <begin position="1"/>
        <end position="149"/>
    </location>
</feature>
<feature type="region of interest" description="DNA-binding" evidence="1">
    <location>
        <begin position="1"/>
        <end position="84"/>
    </location>
</feature>
<feature type="region of interest" description="Dimerization" evidence="1">
    <location>
        <begin position="85"/>
        <end position="142"/>
    </location>
</feature>
<feature type="binding site" evidence="1">
    <location>
        <position position="33"/>
    </location>
    <ligand>
        <name>Zn(2+)</name>
        <dbReference type="ChEBI" id="CHEBI:29105"/>
    </ligand>
</feature>
<feature type="binding site" evidence="1">
    <location>
        <position position="81"/>
    </location>
    <ligand>
        <name>Zn(2+)</name>
        <dbReference type="ChEBI" id="CHEBI:29105"/>
    </ligand>
</feature>
<feature type="binding site" evidence="1">
    <location>
        <position position="87"/>
    </location>
    <ligand>
        <name>Fe cation</name>
        <dbReference type="ChEBI" id="CHEBI:24875"/>
    </ligand>
</feature>
<feature type="binding site" evidence="1">
    <location>
        <position position="89"/>
    </location>
    <ligand>
        <name>Fe cation</name>
        <dbReference type="ChEBI" id="CHEBI:24875"/>
    </ligand>
</feature>
<feature type="binding site" evidence="1">
    <location>
        <position position="90"/>
    </location>
    <ligand>
        <name>Zn(2+)</name>
        <dbReference type="ChEBI" id="CHEBI:29105"/>
    </ligand>
</feature>
<feature type="binding site" evidence="1">
    <location>
        <position position="93"/>
    </location>
    <ligand>
        <name>Zn(2+)</name>
        <dbReference type="ChEBI" id="CHEBI:29105"/>
    </ligand>
</feature>
<feature type="binding site" evidence="1">
    <location>
        <position position="96"/>
    </location>
    <ligand>
        <name>Zn(2+)</name>
        <dbReference type="ChEBI" id="CHEBI:29105"/>
    </ligand>
</feature>
<feature type="binding site" evidence="1">
    <location>
        <position position="101"/>
    </location>
    <ligand>
        <name>Zn(2+)</name>
        <dbReference type="ChEBI" id="CHEBI:29105"/>
    </ligand>
</feature>
<feature type="binding site" evidence="1">
    <location>
        <position position="108"/>
    </location>
    <ligand>
        <name>Fe cation</name>
        <dbReference type="ChEBI" id="CHEBI:24875"/>
    </ligand>
</feature>
<feature type="binding site" evidence="1">
    <location>
        <position position="125"/>
    </location>
    <ligand>
        <name>Fe cation</name>
        <dbReference type="ChEBI" id="CHEBI:24875"/>
    </ligand>
</feature>
<feature type="sequence conflict" description="In Ref. 1; AAA27521." evidence="2" ref="1">
    <original>N</original>
    <variation>S</variation>
    <location>
        <position position="149"/>
    </location>
</feature>
<gene>
    <name type="primary">fur</name>
    <name type="ordered locus">VV1_0175</name>
</gene>
<sequence length="149" mass="16743">MSDNNQALKDAGLKVTLPRLKILEVLQQPDCQHISAEDLYKKLIDLGEEIGLATVYRVLNQFDDAGIVTRHHFEGGKSVFELSTQHHHDHLVCLDCGEVIEFSDDIIEERQKEIAAAYNVQLTNHSLYLYGKCGDGSCKGNPDAHKRKN</sequence>
<reference key="1">
    <citation type="journal article" date="1993" name="J. Bacteriol.">
        <title>Cloning and genetic analysis of the Vibrio vulnificus fur gene and construction of a fur mutant by in vivo marker exchange.</title>
        <authorList>
            <person name="Litwin C.M."/>
            <person name="Calderwood S.B."/>
        </authorList>
    </citation>
    <scope>NUCLEOTIDE SEQUENCE [GENOMIC DNA]</scope>
</reference>
<reference key="2">
    <citation type="submission" date="2002-12" db="EMBL/GenBank/DDBJ databases">
        <title>Complete genome sequence of Vibrio vulnificus CMCP6.</title>
        <authorList>
            <person name="Rhee J.H."/>
            <person name="Kim S.Y."/>
            <person name="Chung S.S."/>
            <person name="Kim J.J."/>
            <person name="Moon Y.H."/>
            <person name="Jeong H."/>
            <person name="Choy H.E."/>
        </authorList>
    </citation>
    <scope>NUCLEOTIDE SEQUENCE [LARGE SCALE GENOMIC DNA]</scope>
    <source>
        <strain>CMCP6</strain>
    </source>
</reference>
<keyword id="KW-0963">Cytoplasm</keyword>
<keyword id="KW-0238">DNA-binding</keyword>
<keyword id="KW-0408">Iron</keyword>
<keyword id="KW-0479">Metal-binding</keyword>
<keyword id="KW-0678">Repressor</keyword>
<keyword id="KW-0804">Transcription</keyword>
<keyword id="KW-0805">Transcription regulation</keyword>
<keyword id="KW-0862">Zinc</keyword>
<evidence type="ECO:0000250" key="1"/>
<evidence type="ECO:0000305" key="2"/>
<organism>
    <name type="scientific">Vibrio vulnificus (strain CMCP6)</name>
    <dbReference type="NCBI Taxonomy" id="216895"/>
    <lineage>
        <taxon>Bacteria</taxon>
        <taxon>Pseudomonadati</taxon>
        <taxon>Pseudomonadota</taxon>
        <taxon>Gammaproteobacteria</taxon>
        <taxon>Vibrionales</taxon>
        <taxon>Vibrionaceae</taxon>
        <taxon>Vibrio</taxon>
    </lineage>
</organism>